<dbReference type="EMBL" id="AJ248286">
    <property type="protein sequence ID" value="CAB50111.1"/>
    <property type="molecule type" value="Genomic_DNA"/>
</dbReference>
<dbReference type="EMBL" id="HE613800">
    <property type="protein sequence ID" value="CCE70635.1"/>
    <property type="status" value="ALT_INIT"/>
    <property type="molecule type" value="Genomic_DNA"/>
</dbReference>
<dbReference type="PIR" id="B75101">
    <property type="entry name" value="B75101"/>
</dbReference>
<dbReference type="SMR" id="Q9UZE8"/>
<dbReference type="STRING" id="272844.PAB0800"/>
<dbReference type="KEGG" id="pab:PAB0800"/>
<dbReference type="PATRIC" id="fig|272844.11.peg.1279"/>
<dbReference type="eggNOG" id="arCOG03407">
    <property type="taxonomic scope" value="Archaea"/>
</dbReference>
<dbReference type="HOGENOM" id="CLU_068608_0_0_2"/>
<dbReference type="OrthoDB" id="65550at2157"/>
<dbReference type="PhylomeDB" id="Q9UZE8"/>
<dbReference type="Proteomes" id="UP000000810">
    <property type="component" value="Chromosome"/>
</dbReference>
<dbReference type="Proteomes" id="UP000009139">
    <property type="component" value="Chromosome"/>
</dbReference>
<dbReference type="GO" id="GO:0005524">
    <property type="term" value="F:ATP binding"/>
    <property type="evidence" value="ECO:0007669"/>
    <property type="project" value="UniProtKB-KW"/>
</dbReference>
<dbReference type="Gene3D" id="3.40.50.300">
    <property type="entry name" value="P-loop containing nucleotide triphosphate hydrolases"/>
    <property type="match status" value="1"/>
</dbReference>
<dbReference type="Gene3D" id="1.10.10.10">
    <property type="entry name" value="Winged helix-like DNA-binding domain superfamily/Winged helix DNA-binding domain"/>
    <property type="match status" value="1"/>
</dbReference>
<dbReference type="InterPro" id="IPR051667">
    <property type="entry name" value="Archaeal_ATPase_domain"/>
</dbReference>
<dbReference type="InterPro" id="IPR011579">
    <property type="entry name" value="ATPase_dom"/>
</dbReference>
<dbReference type="InterPro" id="IPR049081">
    <property type="entry name" value="MJ1010-like_2nd"/>
</dbReference>
<dbReference type="InterPro" id="IPR027417">
    <property type="entry name" value="P-loop_NTPase"/>
</dbReference>
<dbReference type="InterPro" id="IPR036388">
    <property type="entry name" value="WH-like_DNA-bd_sf"/>
</dbReference>
<dbReference type="PANTHER" id="PTHR37096:SF1">
    <property type="entry name" value="AAA+ ATPASE DOMAIN-CONTAINING PROTEIN"/>
    <property type="match status" value="1"/>
</dbReference>
<dbReference type="PANTHER" id="PTHR37096">
    <property type="entry name" value="YALI0E33429P"/>
    <property type="match status" value="1"/>
</dbReference>
<dbReference type="Pfam" id="PF01637">
    <property type="entry name" value="ATPase_2"/>
    <property type="match status" value="1"/>
</dbReference>
<dbReference type="Pfam" id="PF21690">
    <property type="entry name" value="MJ1010-like_2nd"/>
    <property type="match status" value="1"/>
</dbReference>
<dbReference type="SUPFAM" id="SSF52540">
    <property type="entry name" value="P-loop containing nucleoside triphosphate hydrolases"/>
    <property type="match status" value="1"/>
</dbReference>
<organism>
    <name type="scientific">Pyrococcus abyssi (strain GE5 / Orsay)</name>
    <dbReference type="NCBI Taxonomy" id="272844"/>
    <lineage>
        <taxon>Archaea</taxon>
        <taxon>Methanobacteriati</taxon>
        <taxon>Methanobacteriota</taxon>
        <taxon>Thermococci</taxon>
        <taxon>Thermococcales</taxon>
        <taxon>Thermococcaceae</taxon>
        <taxon>Pyrococcus</taxon>
    </lineage>
</organism>
<name>Y1200_PYRAB</name>
<evidence type="ECO:0000255" key="1"/>
<evidence type="ECO:0000305" key="2"/>
<proteinExistence type="inferred from homology"/>
<reference key="1">
    <citation type="journal article" date="2003" name="Mol. Microbiol.">
        <title>An integrated analysis of the genome of the hyperthermophilic archaeon Pyrococcus abyssi.</title>
        <authorList>
            <person name="Cohen G.N."/>
            <person name="Barbe V."/>
            <person name="Flament D."/>
            <person name="Galperin M."/>
            <person name="Heilig R."/>
            <person name="Lecompte O."/>
            <person name="Poch O."/>
            <person name="Prieur D."/>
            <person name="Querellou J."/>
            <person name="Ripp R."/>
            <person name="Thierry J.-C."/>
            <person name="Van der Oost J."/>
            <person name="Weissenbach J."/>
            <person name="Zivanovic Y."/>
            <person name="Forterre P."/>
        </authorList>
    </citation>
    <scope>NUCLEOTIDE SEQUENCE [LARGE SCALE GENOMIC DNA]</scope>
    <source>
        <strain>GE5 / Orsay</strain>
    </source>
</reference>
<reference key="2">
    <citation type="journal article" date="2012" name="Curr. Microbiol.">
        <title>Re-annotation of two hyperthermophilic archaea Pyrococcus abyssi GE5 and Pyrococcus furiosus DSM 3638.</title>
        <authorList>
            <person name="Gao J."/>
            <person name="Wang J."/>
        </authorList>
    </citation>
    <scope>GENOME REANNOTATION</scope>
    <source>
        <strain>GE5 / Orsay</strain>
    </source>
</reference>
<protein>
    <recommendedName>
        <fullName>Uncharacterized ATP-binding protein PYRAB12000</fullName>
    </recommendedName>
</protein>
<accession>Q9UZE8</accession>
<accession>G8ZKJ2</accession>
<sequence>MFFDREKELEELTDLVSSKPSMITFTYGPINSGKTTLLIEFSKRLPREYIVFNINLRGRFIREEKDFIKVLFMKKEESESIKNSYKGIPIPEGILNEILENPFLFLEEYFEEINNSGRIPVLILDELQVIGDLRIDDLLIYKLFNFFVRLTKELHLAHVFVATSDSLFLERVHGEAMLHGRSRFMLVDDFDERTTLEFLTSNGLSEEEAKIAWHYLGGKPSYLVDLLQRSRIRVEDYCKEALKWRTSQILDSLYTLKGRKLRKVIELLSKFRENDEITYGPLSEEIVWSVRNNILFADPRERKLRPQGRLEKHAIELALEKLRNNF</sequence>
<comment type="similarity">
    <text evidence="2">Belongs to the archaeal ATPase family.</text>
</comment>
<comment type="sequence caution" evidence="2">
    <conflict type="erroneous initiation">
        <sequence resource="EMBL-CDS" id="CCE70635"/>
    </conflict>
    <text>Truncated N-terminus.</text>
</comment>
<gene>
    <name type="ordered locus">PYRAB12000</name>
    <name type="ORF">PAB0800</name>
</gene>
<keyword id="KW-0067">ATP-binding</keyword>
<keyword id="KW-0547">Nucleotide-binding</keyword>
<feature type="chain" id="PRO_0000184685" description="Uncharacterized ATP-binding protein PYRAB12000">
    <location>
        <begin position="1"/>
        <end position="326"/>
    </location>
</feature>
<feature type="binding site" evidence="1">
    <location>
        <begin position="28"/>
        <end position="35"/>
    </location>
    <ligand>
        <name>ATP</name>
        <dbReference type="ChEBI" id="CHEBI:30616"/>
    </ligand>
</feature>